<sequence length="400" mass="44043">MSKLILAINAGSSSLKFQLIRMPEEELVTKGLVERIGLKDSIFTIEVNGEKVKTVQDIKDHVEAVDIMLDAFKAHNIINDINDIDGTGHRVVHGGEKFPESVAITDEVEKEIEELSELAPLHNPANLMGIRAFRKLLPNIPHVAIFDTAFHQTMPEKAYLYSLPYHYYKDYGIRKYGFHGTSHKFVSQRAAEMLDKPIEDLRIISCHIGNGASIAAIDGGKSIDTSMGFTPLAGVTMGTRSGNIDPALIPFIMEKTGKTAEQVLEILNKESGLLGLSGTSSDLRDLSEEAESGKARSQMALDVFASKIHKYIGSYAARMHGVDVIVFTAGIGENSVEIRAKVLEGLEFMGVYWDPKKNENLLRGKEGFINYPHSPVKVVVIPTDEESMIARDVMTFGGLK</sequence>
<feature type="chain" id="PRO_1000074194" description="Acetate kinase">
    <location>
        <begin position="1"/>
        <end position="400"/>
    </location>
</feature>
<feature type="active site" description="Proton donor/acceptor" evidence="1">
    <location>
        <position position="147"/>
    </location>
</feature>
<feature type="binding site" evidence="1">
    <location>
        <position position="9"/>
    </location>
    <ligand>
        <name>Mg(2+)</name>
        <dbReference type="ChEBI" id="CHEBI:18420"/>
    </ligand>
</feature>
<feature type="binding site" evidence="1">
    <location>
        <position position="16"/>
    </location>
    <ligand>
        <name>ATP</name>
        <dbReference type="ChEBI" id="CHEBI:30616"/>
    </ligand>
</feature>
<feature type="binding site" evidence="1">
    <location>
        <position position="90"/>
    </location>
    <ligand>
        <name>substrate</name>
    </ligand>
</feature>
<feature type="binding site" evidence="1">
    <location>
        <begin position="207"/>
        <end position="211"/>
    </location>
    <ligand>
        <name>ATP</name>
        <dbReference type="ChEBI" id="CHEBI:30616"/>
    </ligand>
</feature>
<feature type="binding site" evidence="1">
    <location>
        <begin position="282"/>
        <end position="284"/>
    </location>
    <ligand>
        <name>ATP</name>
        <dbReference type="ChEBI" id="CHEBI:30616"/>
    </ligand>
</feature>
<feature type="binding site" evidence="1">
    <location>
        <begin position="330"/>
        <end position="334"/>
    </location>
    <ligand>
        <name>ATP</name>
        <dbReference type="ChEBI" id="CHEBI:30616"/>
    </ligand>
</feature>
<feature type="binding site" evidence="1">
    <location>
        <position position="385"/>
    </location>
    <ligand>
        <name>Mg(2+)</name>
        <dbReference type="ChEBI" id="CHEBI:18420"/>
    </ligand>
</feature>
<feature type="site" description="Transition state stabilizer" evidence="1">
    <location>
        <position position="179"/>
    </location>
</feature>
<feature type="site" description="Transition state stabilizer" evidence="1">
    <location>
        <position position="240"/>
    </location>
</feature>
<reference key="1">
    <citation type="journal article" date="2007" name="BMC Microbiol.">
        <title>Subtle genetic changes enhance virulence of methicillin resistant and sensitive Staphylococcus aureus.</title>
        <authorList>
            <person name="Highlander S.K."/>
            <person name="Hulten K.G."/>
            <person name="Qin X."/>
            <person name="Jiang H."/>
            <person name="Yerrapragada S."/>
            <person name="Mason E.O. Jr."/>
            <person name="Shang Y."/>
            <person name="Williams T.M."/>
            <person name="Fortunov R.M."/>
            <person name="Liu Y."/>
            <person name="Igboeli O."/>
            <person name="Petrosino J."/>
            <person name="Tirumalai M."/>
            <person name="Uzman A."/>
            <person name="Fox G.E."/>
            <person name="Cardenas A.M."/>
            <person name="Muzny D.M."/>
            <person name="Hemphill L."/>
            <person name="Ding Y."/>
            <person name="Dugan S."/>
            <person name="Blyth P.R."/>
            <person name="Buhay C.J."/>
            <person name="Dinh H.H."/>
            <person name="Hawes A.C."/>
            <person name="Holder M."/>
            <person name="Kovar C.L."/>
            <person name="Lee S.L."/>
            <person name="Liu W."/>
            <person name="Nazareth L.V."/>
            <person name="Wang Q."/>
            <person name="Zhou J."/>
            <person name="Kaplan S.L."/>
            <person name="Weinstock G.M."/>
        </authorList>
    </citation>
    <scope>NUCLEOTIDE SEQUENCE [LARGE SCALE GENOMIC DNA]</scope>
    <source>
        <strain>USA300 / TCH1516</strain>
    </source>
</reference>
<keyword id="KW-0067">ATP-binding</keyword>
<keyword id="KW-0963">Cytoplasm</keyword>
<keyword id="KW-0418">Kinase</keyword>
<keyword id="KW-0460">Magnesium</keyword>
<keyword id="KW-0479">Metal-binding</keyword>
<keyword id="KW-0547">Nucleotide-binding</keyword>
<keyword id="KW-0808">Transferase</keyword>
<name>ACKA_STAAT</name>
<organism>
    <name type="scientific">Staphylococcus aureus (strain USA300 / TCH1516)</name>
    <dbReference type="NCBI Taxonomy" id="451516"/>
    <lineage>
        <taxon>Bacteria</taxon>
        <taxon>Bacillati</taxon>
        <taxon>Bacillota</taxon>
        <taxon>Bacilli</taxon>
        <taxon>Bacillales</taxon>
        <taxon>Staphylococcaceae</taxon>
        <taxon>Staphylococcus</taxon>
    </lineage>
</organism>
<accession>A8Z2M7</accession>
<protein>
    <recommendedName>
        <fullName evidence="1">Acetate kinase</fullName>
        <ecNumber evidence="1">2.7.2.1</ecNumber>
    </recommendedName>
    <alternativeName>
        <fullName evidence="1">Acetokinase</fullName>
    </alternativeName>
</protein>
<proteinExistence type="inferred from homology"/>
<evidence type="ECO:0000255" key="1">
    <source>
        <dbReference type="HAMAP-Rule" id="MF_00020"/>
    </source>
</evidence>
<gene>
    <name evidence="1" type="primary">ackA</name>
    <name type="ordered locus">USA300HOU_1698</name>
</gene>
<dbReference type="EC" id="2.7.2.1" evidence="1"/>
<dbReference type="EMBL" id="CP000730">
    <property type="protein sequence ID" value="ABX29705.1"/>
    <property type="molecule type" value="Genomic_DNA"/>
</dbReference>
<dbReference type="RefSeq" id="WP_000040069.1">
    <property type="nucleotide sequence ID" value="NC_010079.1"/>
</dbReference>
<dbReference type="SMR" id="A8Z2M7"/>
<dbReference type="KEGG" id="sax:USA300HOU_1698"/>
<dbReference type="HOGENOM" id="CLU_020352_0_1_9"/>
<dbReference type="UniPathway" id="UPA00340">
    <property type="reaction ID" value="UER00458"/>
</dbReference>
<dbReference type="GO" id="GO:0005737">
    <property type="term" value="C:cytoplasm"/>
    <property type="evidence" value="ECO:0007669"/>
    <property type="project" value="UniProtKB-SubCell"/>
</dbReference>
<dbReference type="GO" id="GO:0008776">
    <property type="term" value="F:acetate kinase activity"/>
    <property type="evidence" value="ECO:0007669"/>
    <property type="project" value="UniProtKB-UniRule"/>
</dbReference>
<dbReference type="GO" id="GO:0005524">
    <property type="term" value="F:ATP binding"/>
    <property type="evidence" value="ECO:0007669"/>
    <property type="project" value="UniProtKB-KW"/>
</dbReference>
<dbReference type="GO" id="GO:0000287">
    <property type="term" value="F:magnesium ion binding"/>
    <property type="evidence" value="ECO:0007669"/>
    <property type="project" value="UniProtKB-UniRule"/>
</dbReference>
<dbReference type="GO" id="GO:0006083">
    <property type="term" value="P:acetate metabolic process"/>
    <property type="evidence" value="ECO:0007669"/>
    <property type="project" value="TreeGrafter"/>
</dbReference>
<dbReference type="GO" id="GO:0006085">
    <property type="term" value="P:acetyl-CoA biosynthetic process"/>
    <property type="evidence" value="ECO:0007669"/>
    <property type="project" value="UniProtKB-UniRule"/>
</dbReference>
<dbReference type="CDD" id="cd24010">
    <property type="entry name" value="ASKHA_NBD_AcK_PK"/>
    <property type="match status" value="1"/>
</dbReference>
<dbReference type="Gene3D" id="3.30.420.40">
    <property type="match status" value="2"/>
</dbReference>
<dbReference type="HAMAP" id="MF_00020">
    <property type="entry name" value="Acetate_kinase"/>
    <property type="match status" value="1"/>
</dbReference>
<dbReference type="InterPro" id="IPR004372">
    <property type="entry name" value="Ac/propionate_kinase"/>
</dbReference>
<dbReference type="InterPro" id="IPR000890">
    <property type="entry name" value="Aliphatic_acid_kin_short-chain"/>
</dbReference>
<dbReference type="InterPro" id="IPR023865">
    <property type="entry name" value="Aliphatic_acid_kinase_CS"/>
</dbReference>
<dbReference type="InterPro" id="IPR043129">
    <property type="entry name" value="ATPase_NBD"/>
</dbReference>
<dbReference type="NCBIfam" id="TIGR00016">
    <property type="entry name" value="ackA"/>
    <property type="match status" value="1"/>
</dbReference>
<dbReference type="PANTHER" id="PTHR21060">
    <property type="entry name" value="ACETATE KINASE"/>
    <property type="match status" value="1"/>
</dbReference>
<dbReference type="PANTHER" id="PTHR21060:SF15">
    <property type="entry name" value="ACETATE KINASE-RELATED"/>
    <property type="match status" value="1"/>
</dbReference>
<dbReference type="Pfam" id="PF00871">
    <property type="entry name" value="Acetate_kinase"/>
    <property type="match status" value="1"/>
</dbReference>
<dbReference type="PIRSF" id="PIRSF000722">
    <property type="entry name" value="Acetate_prop_kin"/>
    <property type="match status" value="1"/>
</dbReference>
<dbReference type="PRINTS" id="PR00471">
    <property type="entry name" value="ACETATEKNASE"/>
</dbReference>
<dbReference type="SUPFAM" id="SSF53067">
    <property type="entry name" value="Actin-like ATPase domain"/>
    <property type="match status" value="2"/>
</dbReference>
<dbReference type="PROSITE" id="PS01075">
    <property type="entry name" value="ACETATE_KINASE_1"/>
    <property type="match status" value="1"/>
</dbReference>
<dbReference type="PROSITE" id="PS01076">
    <property type="entry name" value="ACETATE_KINASE_2"/>
    <property type="match status" value="1"/>
</dbReference>
<comment type="function">
    <text evidence="1">Catalyzes the formation of acetyl phosphate from acetate and ATP. Can also catalyze the reverse reaction.</text>
</comment>
<comment type="catalytic activity">
    <reaction evidence="1">
        <text>acetate + ATP = acetyl phosphate + ADP</text>
        <dbReference type="Rhea" id="RHEA:11352"/>
        <dbReference type="ChEBI" id="CHEBI:22191"/>
        <dbReference type="ChEBI" id="CHEBI:30089"/>
        <dbReference type="ChEBI" id="CHEBI:30616"/>
        <dbReference type="ChEBI" id="CHEBI:456216"/>
        <dbReference type="EC" id="2.7.2.1"/>
    </reaction>
</comment>
<comment type="cofactor">
    <cofactor evidence="1">
        <name>Mg(2+)</name>
        <dbReference type="ChEBI" id="CHEBI:18420"/>
    </cofactor>
    <cofactor evidence="1">
        <name>Mn(2+)</name>
        <dbReference type="ChEBI" id="CHEBI:29035"/>
    </cofactor>
    <text evidence="1">Mg(2+). Can also accept Mn(2+).</text>
</comment>
<comment type="pathway">
    <text evidence="1">Metabolic intermediate biosynthesis; acetyl-CoA biosynthesis; acetyl-CoA from acetate: step 1/2.</text>
</comment>
<comment type="subunit">
    <text evidence="1">Homodimer.</text>
</comment>
<comment type="subcellular location">
    <subcellularLocation>
        <location evidence="1">Cytoplasm</location>
    </subcellularLocation>
</comment>
<comment type="similarity">
    <text evidence="1">Belongs to the acetokinase family.</text>
</comment>